<sequence>MEVILIKPVRKLGKIGDILKVADGFGRNYLLPQKLAIRATKSNKELIVKQKYEFEEKDKQVREEVEKINTIIKDQQLVFIRQTSDDCKLFGSVTNKDIADKLSKNISYNISHSNIILDKQIKSTGIYTVEIRLHAELTSIVTVVVARSESEAQDYLREQKAETLEDVDETA</sequence>
<comment type="function">
    <text evidence="1">Binds to the 23S rRNA.</text>
</comment>
<comment type="similarity">
    <text evidence="1">Belongs to the bacterial ribosomal protein bL9 family.</text>
</comment>
<feature type="chain" id="PRO_0000176671" description="Large ribosomal subunit protein bL9">
    <location>
        <begin position="1"/>
        <end position="171"/>
    </location>
</feature>
<keyword id="KW-1185">Reference proteome</keyword>
<keyword id="KW-0687">Ribonucleoprotein</keyword>
<keyword id="KW-0689">Ribosomal protein</keyword>
<keyword id="KW-0694">RNA-binding</keyword>
<keyword id="KW-0699">rRNA-binding</keyword>
<organism>
    <name type="scientific">Rickettsia prowazekii (strain Madrid E)</name>
    <dbReference type="NCBI Taxonomy" id="272947"/>
    <lineage>
        <taxon>Bacteria</taxon>
        <taxon>Pseudomonadati</taxon>
        <taxon>Pseudomonadota</taxon>
        <taxon>Alphaproteobacteria</taxon>
        <taxon>Rickettsiales</taxon>
        <taxon>Rickettsiaceae</taxon>
        <taxon>Rickettsieae</taxon>
        <taxon>Rickettsia</taxon>
        <taxon>typhus group</taxon>
    </lineage>
</organism>
<name>RL9_RICPR</name>
<proteinExistence type="inferred from homology"/>
<dbReference type="EMBL" id="AJ235270">
    <property type="protein sequence ID" value="CAA14512.1"/>
    <property type="molecule type" value="Genomic_DNA"/>
</dbReference>
<dbReference type="PIR" id="A71712">
    <property type="entry name" value="A71712"/>
</dbReference>
<dbReference type="RefSeq" id="NP_220435.1">
    <property type="nucleotide sequence ID" value="NC_000963.1"/>
</dbReference>
<dbReference type="RefSeq" id="WP_004596640.1">
    <property type="nucleotide sequence ID" value="NC_000963.1"/>
</dbReference>
<dbReference type="SMR" id="Q9ZEA4"/>
<dbReference type="STRING" id="272947.gene:17555124"/>
<dbReference type="EnsemblBacteria" id="CAA14512">
    <property type="protein sequence ID" value="CAA14512"/>
    <property type="gene ID" value="CAA14512"/>
</dbReference>
<dbReference type="GeneID" id="57569169"/>
<dbReference type="KEGG" id="rpr:RP041"/>
<dbReference type="PATRIC" id="fig|272947.5.peg.42"/>
<dbReference type="eggNOG" id="COG0359">
    <property type="taxonomic scope" value="Bacteria"/>
</dbReference>
<dbReference type="HOGENOM" id="CLU_078938_3_0_5"/>
<dbReference type="OrthoDB" id="9788336at2"/>
<dbReference type="Proteomes" id="UP000002480">
    <property type="component" value="Chromosome"/>
</dbReference>
<dbReference type="GO" id="GO:1990904">
    <property type="term" value="C:ribonucleoprotein complex"/>
    <property type="evidence" value="ECO:0007669"/>
    <property type="project" value="UniProtKB-KW"/>
</dbReference>
<dbReference type="GO" id="GO:0005840">
    <property type="term" value="C:ribosome"/>
    <property type="evidence" value="ECO:0007669"/>
    <property type="project" value="UniProtKB-KW"/>
</dbReference>
<dbReference type="GO" id="GO:0019843">
    <property type="term" value="F:rRNA binding"/>
    <property type="evidence" value="ECO:0007669"/>
    <property type="project" value="UniProtKB-UniRule"/>
</dbReference>
<dbReference type="GO" id="GO:0003735">
    <property type="term" value="F:structural constituent of ribosome"/>
    <property type="evidence" value="ECO:0007669"/>
    <property type="project" value="InterPro"/>
</dbReference>
<dbReference type="GO" id="GO:0006412">
    <property type="term" value="P:translation"/>
    <property type="evidence" value="ECO:0007669"/>
    <property type="project" value="UniProtKB-UniRule"/>
</dbReference>
<dbReference type="Gene3D" id="3.10.430.100">
    <property type="entry name" value="Ribosomal protein L9, C-terminal domain"/>
    <property type="match status" value="1"/>
</dbReference>
<dbReference type="Gene3D" id="3.40.5.10">
    <property type="entry name" value="Ribosomal protein L9, N-terminal domain"/>
    <property type="match status" value="1"/>
</dbReference>
<dbReference type="HAMAP" id="MF_00503">
    <property type="entry name" value="Ribosomal_bL9"/>
    <property type="match status" value="1"/>
</dbReference>
<dbReference type="InterPro" id="IPR000244">
    <property type="entry name" value="Ribosomal_bL9"/>
</dbReference>
<dbReference type="InterPro" id="IPR009027">
    <property type="entry name" value="Ribosomal_bL9/RNase_H1_N"/>
</dbReference>
<dbReference type="InterPro" id="IPR020594">
    <property type="entry name" value="Ribosomal_bL9_bac/chp"/>
</dbReference>
<dbReference type="InterPro" id="IPR020069">
    <property type="entry name" value="Ribosomal_bL9_C"/>
</dbReference>
<dbReference type="InterPro" id="IPR036791">
    <property type="entry name" value="Ribosomal_bL9_C_sf"/>
</dbReference>
<dbReference type="InterPro" id="IPR020070">
    <property type="entry name" value="Ribosomal_bL9_N"/>
</dbReference>
<dbReference type="InterPro" id="IPR036935">
    <property type="entry name" value="Ribosomal_bL9_N_sf"/>
</dbReference>
<dbReference type="NCBIfam" id="TIGR00158">
    <property type="entry name" value="L9"/>
    <property type="match status" value="1"/>
</dbReference>
<dbReference type="PANTHER" id="PTHR21368">
    <property type="entry name" value="50S RIBOSOMAL PROTEIN L9"/>
    <property type="match status" value="1"/>
</dbReference>
<dbReference type="Pfam" id="PF03948">
    <property type="entry name" value="Ribosomal_L9_C"/>
    <property type="match status" value="1"/>
</dbReference>
<dbReference type="Pfam" id="PF01281">
    <property type="entry name" value="Ribosomal_L9_N"/>
    <property type="match status" value="1"/>
</dbReference>
<dbReference type="SUPFAM" id="SSF55658">
    <property type="entry name" value="L9 N-domain-like"/>
    <property type="match status" value="1"/>
</dbReference>
<dbReference type="SUPFAM" id="SSF55653">
    <property type="entry name" value="Ribosomal protein L9 C-domain"/>
    <property type="match status" value="1"/>
</dbReference>
<dbReference type="PROSITE" id="PS00651">
    <property type="entry name" value="RIBOSOMAL_L9"/>
    <property type="match status" value="1"/>
</dbReference>
<gene>
    <name evidence="1" type="primary">rplI</name>
    <name type="ordered locus">RP041</name>
</gene>
<accession>Q9ZEA4</accession>
<evidence type="ECO:0000255" key="1">
    <source>
        <dbReference type="HAMAP-Rule" id="MF_00503"/>
    </source>
</evidence>
<evidence type="ECO:0000305" key="2"/>
<protein>
    <recommendedName>
        <fullName evidence="1">Large ribosomal subunit protein bL9</fullName>
    </recommendedName>
    <alternativeName>
        <fullName evidence="2">50S ribosomal protein L9</fullName>
    </alternativeName>
</protein>
<reference key="1">
    <citation type="journal article" date="1998" name="Nature">
        <title>The genome sequence of Rickettsia prowazekii and the origin of mitochondria.</title>
        <authorList>
            <person name="Andersson S.G.E."/>
            <person name="Zomorodipour A."/>
            <person name="Andersson J.O."/>
            <person name="Sicheritz-Ponten T."/>
            <person name="Alsmark U.C.M."/>
            <person name="Podowski R.M."/>
            <person name="Naeslund A.K."/>
            <person name="Eriksson A.-S."/>
            <person name="Winkler H.H."/>
            <person name="Kurland C.G."/>
        </authorList>
    </citation>
    <scope>NUCLEOTIDE SEQUENCE [LARGE SCALE GENOMIC DNA]</scope>
    <source>
        <strain>Madrid E</strain>
    </source>
</reference>